<keyword id="KW-0216">Detoxification</keyword>
<keyword id="KW-1185">Reference proteome</keyword>
<keyword id="KW-0808">Transferase</keyword>
<comment type="function">
    <text evidence="3">Conjugation of reduced glutathione to a wide number of exogenous and endogenous hydrophobic electrophiles (PubMed:22082028). May be involved in detoxification (PubMed:22082028).</text>
</comment>
<comment type="catalytic activity">
    <reaction evidence="3">
        <text>RX + glutathione = an S-substituted glutathione + a halide anion + H(+)</text>
        <dbReference type="Rhea" id="RHEA:16437"/>
        <dbReference type="ChEBI" id="CHEBI:15378"/>
        <dbReference type="ChEBI" id="CHEBI:16042"/>
        <dbReference type="ChEBI" id="CHEBI:17792"/>
        <dbReference type="ChEBI" id="CHEBI:57925"/>
        <dbReference type="ChEBI" id="CHEBI:90779"/>
        <dbReference type="EC" id="2.5.1.18"/>
    </reaction>
</comment>
<comment type="biophysicochemical properties">
    <kinetics>
        <KM evidence="3">1.23 mM for glutathione</KM>
        <KM evidence="3">3.79 mM for 1-chloro-2,4-dinitrobenzene</KM>
        <Vmax evidence="3">0.07 umol/min/mg enzyme with 1-chloro-2,4-dinitrobenzene as substrate</Vmax>
        <Vmax evidence="3">0.013 umol/min/mg enzyme with phenethyl isothiocyanate as substrate</Vmax>
    </kinetics>
</comment>
<comment type="subunit">
    <text evidence="2">Homodimer.</text>
</comment>
<comment type="interaction">
    <interactant intactId="EBI-152218">
        <id>Q9VG94</id>
    </interactant>
    <interactant intactId="EBI-117276">
        <id>Q9VG96</id>
        <label>GstD4</label>
    </interactant>
    <organismsDiffer>false</organismsDiffer>
    <experiments>3</experiments>
</comment>
<comment type="similarity">
    <text evidence="4">Belongs to the GST superfamily. Delta family.</text>
</comment>
<sequence>MDLYNMSGSPSTRAVMMTAKAVGVEFNSIQVNTFVGEQLEPWFVKINPQHTIPTLVDNLFVIWETRAIVVYLVEQYGKDDSLYPKDPQKQALINQRLYFDMGTLYDGIAKYFFPLLRTGKPGTQENLEKLNAAFDLLNNFLDGQDYVAGNQLSVADIVILATVSTTEMVDFDLKKFPNVDRWYKNAQKVTPGWDENLARIQSAKKFLAENLIEKL</sequence>
<name>GSTD6_DROME</name>
<dbReference type="EC" id="2.5.1.18" evidence="3"/>
<dbReference type="EMBL" id="M97702">
    <property type="status" value="NOT_ANNOTATED_CDS"/>
    <property type="molecule type" value="Genomic_DNA"/>
</dbReference>
<dbReference type="EMBL" id="AE014297">
    <property type="protein sequence ID" value="AAF54791.1"/>
    <property type="molecule type" value="Genomic_DNA"/>
</dbReference>
<dbReference type="PIR" id="B46681">
    <property type="entry name" value="B46681"/>
</dbReference>
<dbReference type="RefSeq" id="NP_524915.1">
    <property type="nucleotide sequence ID" value="NM_080176.3"/>
</dbReference>
<dbReference type="SMR" id="Q9VG94"/>
<dbReference type="BioGRID" id="71336">
    <property type="interactions" value="2"/>
</dbReference>
<dbReference type="DIP" id="DIP-19904N"/>
<dbReference type="FunCoup" id="Q9VG94">
    <property type="interactions" value="182"/>
</dbReference>
<dbReference type="IntAct" id="Q9VG94">
    <property type="interactions" value="2"/>
</dbReference>
<dbReference type="STRING" id="7227.FBpp0082045"/>
<dbReference type="GlyGen" id="Q9VG94">
    <property type="glycosylation" value="1 site"/>
</dbReference>
<dbReference type="PaxDb" id="7227-FBpp0082045"/>
<dbReference type="EnsemblMetazoa" id="FBtr0082573">
    <property type="protein sequence ID" value="FBpp0082045"/>
    <property type="gene ID" value="FBgn0010042"/>
</dbReference>
<dbReference type="GeneID" id="48339"/>
<dbReference type="KEGG" id="dme:Dmel_CG4423"/>
<dbReference type="AGR" id="FB:FBgn0010042"/>
<dbReference type="CTD" id="48339"/>
<dbReference type="FlyBase" id="FBgn0010042">
    <property type="gene designation" value="GstD6"/>
</dbReference>
<dbReference type="VEuPathDB" id="VectorBase:FBgn0010042"/>
<dbReference type="eggNOG" id="KOG0867">
    <property type="taxonomic scope" value="Eukaryota"/>
</dbReference>
<dbReference type="GeneTree" id="ENSGT00940000164816"/>
<dbReference type="HOGENOM" id="CLU_011226_2_1_1"/>
<dbReference type="InParanoid" id="Q9VG94"/>
<dbReference type="OMA" id="TRAVMMT"/>
<dbReference type="OrthoDB" id="2309723at2759"/>
<dbReference type="PhylomeDB" id="Q9VG94"/>
<dbReference type="SABIO-RK" id="Q9VG94"/>
<dbReference type="BioGRID-ORCS" id="48339">
    <property type="hits" value="0 hits in 1 CRISPR screen"/>
</dbReference>
<dbReference type="GenomeRNAi" id="48339"/>
<dbReference type="PRO" id="PR:Q9VG94"/>
<dbReference type="Proteomes" id="UP000000803">
    <property type="component" value="Chromosome 3R"/>
</dbReference>
<dbReference type="Bgee" id="FBgn0010042">
    <property type="expression patterns" value="Expressed in visual pigment cell (sensu Nematoda and Protostomia) in testis and 12 other cell types or tissues"/>
</dbReference>
<dbReference type="ExpressionAtlas" id="Q9VG94">
    <property type="expression patterns" value="baseline and differential"/>
</dbReference>
<dbReference type="GO" id="GO:0005737">
    <property type="term" value="C:cytoplasm"/>
    <property type="evidence" value="ECO:0000250"/>
    <property type="project" value="FlyBase"/>
</dbReference>
<dbReference type="GO" id="GO:0004364">
    <property type="term" value="F:glutathione transferase activity"/>
    <property type="evidence" value="ECO:0000314"/>
    <property type="project" value="FlyBase"/>
</dbReference>
<dbReference type="GO" id="GO:0006749">
    <property type="term" value="P:glutathione metabolic process"/>
    <property type="evidence" value="ECO:0000314"/>
    <property type="project" value="FlyBase"/>
</dbReference>
<dbReference type="GO" id="GO:0009636">
    <property type="term" value="P:response to toxic substance"/>
    <property type="evidence" value="ECO:0007669"/>
    <property type="project" value="UniProtKB-KW"/>
</dbReference>
<dbReference type="CDD" id="cd03177">
    <property type="entry name" value="GST_C_Delta_Epsilon"/>
    <property type="match status" value="1"/>
</dbReference>
<dbReference type="CDD" id="cd03045">
    <property type="entry name" value="GST_N_Delta_Epsilon"/>
    <property type="match status" value="1"/>
</dbReference>
<dbReference type="FunFam" id="3.40.30.10:FF:000034">
    <property type="entry name" value="glutathione S-transferase 1"/>
    <property type="match status" value="1"/>
</dbReference>
<dbReference type="FunFam" id="1.20.1050.10:FF:000007">
    <property type="entry name" value="Glutathione S-transferase 1-1"/>
    <property type="match status" value="1"/>
</dbReference>
<dbReference type="Gene3D" id="1.20.1050.10">
    <property type="match status" value="1"/>
</dbReference>
<dbReference type="Gene3D" id="3.40.30.10">
    <property type="entry name" value="Glutaredoxin"/>
    <property type="match status" value="1"/>
</dbReference>
<dbReference type="InterPro" id="IPR010987">
    <property type="entry name" value="Glutathione-S-Trfase_C-like"/>
</dbReference>
<dbReference type="InterPro" id="IPR036282">
    <property type="entry name" value="Glutathione-S-Trfase_C_sf"/>
</dbReference>
<dbReference type="InterPro" id="IPR040079">
    <property type="entry name" value="Glutathione_S-Trfase"/>
</dbReference>
<dbReference type="InterPro" id="IPR004045">
    <property type="entry name" value="Glutathione_S-Trfase_N"/>
</dbReference>
<dbReference type="InterPro" id="IPR004046">
    <property type="entry name" value="GST_C"/>
</dbReference>
<dbReference type="InterPro" id="IPR036249">
    <property type="entry name" value="Thioredoxin-like_sf"/>
</dbReference>
<dbReference type="PANTHER" id="PTHR43969">
    <property type="entry name" value="GLUTATHIONE S TRANSFERASE D10, ISOFORM A-RELATED"/>
    <property type="match status" value="1"/>
</dbReference>
<dbReference type="PANTHER" id="PTHR43969:SF9">
    <property type="entry name" value="GLUTATHIONE S TRANSFERASE D10, ISOFORM A-RELATED"/>
    <property type="match status" value="1"/>
</dbReference>
<dbReference type="Pfam" id="PF00043">
    <property type="entry name" value="GST_C"/>
    <property type="match status" value="1"/>
</dbReference>
<dbReference type="Pfam" id="PF02798">
    <property type="entry name" value="GST_N"/>
    <property type="match status" value="1"/>
</dbReference>
<dbReference type="SFLD" id="SFLDS00019">
    <property type="entry name" value="Glutathione_Transferase_(cytos"/>
    <property type="match status" value="1"/>
</dbReference>
<dbReference type="SFLD" id="SFLDG01153">
    <property type="entry name" value="Main.4:_Theta-like"/>
    <property type="match status" value="1"/>
</dbReference>
<dbReference type="SUPFAM" id="SSF47616">
    <property type="entry name" value="GST C-terminal domain-like"/>
    <property type="match status" value="1"/>
</dbReference>
<dbReference type="SUPFAM" id="SSF52833">
    <property type="entry name" value="Thioredoxin-like"/>
    <property type="match status" value="1"/>
</dbReference>
<dbReference type="PROSITE" id="PS50405">
    <property type="entry name" value="GST_CTER"/>
    <property type="match status" value="1"/>
</dbReference>
<dbReference type="PROSITE" id="PS50404">
    <property type="entry name" value="GST_NTER"/>
    <property type="match status" value="1"/>
</dbReference>
<reference key="1">
    <citation type="journal article" date="1993" name="J. Biol. Chem.">
        <title>The glutathione S-transferase D genes. A divergently organized, intronless gene family in Drosophila melanogaster.</title>
        <authorList>
            <person name="Toung Y.-P.S."/>
            <person name="Hsieh T.-S."/>
            <person name="Tu C.-P.D."/>
        </authorList>
    </citation>
    <scope>NUCLEOTIDE SEQUENCE [GENOMIC DNA]</scope>
</reference>
<reference key="2">
    <citation type="journal article" date="2000" name="Science">
        <title>The genome sequence of Drosophila melanogaster.</title>
        <authorList>
            <person name="Adams M.D."/>
            <person name="Celniker S.E."/>
            <person name="Holt R.A."/>
            <person name="Evans C.A."/>
            <person name="Gocayne J.D."/>
            <person name="Amanatides P.G."/>
            <person name="Scherer S.E."/>
            <person name="Li P.W."/>
            <person name="Hoskins R.A."/>
            <person name="Galle R.F."/>
            <person name="George R.A."/>
            <person name="Lewis S.E."/>
            <person name="Richards S."/>
            <person name="Ashburner M."/>
            <person name="Henderson S.N."/>
            <person name="Sutton G.G."/>
            <person name="Wortman J.R."/>
            <person name="Yandell M.D."/>
            <person name="Zhang Q."/>
            <person name="Chen L.X."/>
            <person name="Brandon R.C."/>
            <person name="Rogers Y.-H.C."/>
            <person name="Blazej R.G."/>
            <person name="Champe M."/>
            <person name="Pfeiffer B.D."/>
            <person name="Wan K.H."/>
            <person name="Doyle C."/>
            <person name="Baxter E.G."/>
            <person name="Helt G."/>
            <person name="Nelson C.R."/>
            <person name="Miklos G.L.G."/>
            <person name="Abril J.F."/>
            <person name="Agbayani A."/>
            <person name="An H.-J."/>
            <person name="Andrews-Pfannkoch C."/>
            <person name="Baldwin D."/>
            <person name="Ballew R.M."/>
            <person name="Basu A."/>
            <person name="Baxendale J."/>
            <person name="Bayraktaroglu L."/>
            <person name="Beasley E.M."/>
            <person name="Beeson K.Y."/>
            <person name="Benos P.V."/>
            <person name="Berman B.P."/>
            <person name="Bhandari D."/>
            <person name="Bolshakov S."/>
            <person name="Borkova D."/>
            <person name="Botchan M.R."/>
            <person name="Bouck J."/>
            <person name="Brokstein P."/>
            <person name="Brottier P."/>
            <person name="Burtis K.C."/>
            <person name="Busam D.A."/>
            <person name="Butler H."/>
            <person name="Cadieu E."/>
            <person name="Center A."/>
            <person name="Chandra I."/>
            <person name="Cherry J.M."/>
            <person name="Cawley S."/>
            <person name="Dahlke C."/>
            <person name="Davenport L.B."/>
            <person name="Davies P."/>
            <person name="de Pablos B."/>
            <person name="Delcher A."/>
            <person name="Deng Z."/>
            <person name="Mays A.D."/>
            <person name="Dew I."/>
            <person name="Dietz S.M."/>
            <person name="Dodson K."/>
            <person name="Doup L.E."/>
            <person name="Downes M."/>
            <person name="Dugan-Rocha S."/>
            <person name="Dunkov B.C."/>
            <person name="Dunn P."/>
            <person name="Durbin K.J."/>
            <person name="Evangelista C.C."/>
            <person name="Ferraz C."/>
            <person name="Ferriera S."/>
            <person name="Fleischmann W."/>
            <person name="Fosler C."/>
            <person name="Gabrielian A.E."/>
            <person name="Garg N.S."/>
            <person name="Gelbart W.M."/>
            <person name="Glasser K."/>
            <person name="Glodek A."/>
            <person name="Gong F."/>
            <person name="Gorrell J.H."/>
            <person name="Gu Z."/>
            <person name="Guan P."/>
            <person name="Harris M."/>
            <person name="Harris N.L."/>
            <person name="Harvey D.A."/>
            <person name="Heiman T.J."/>
            <person name="Hernandez J.R."/>
            <person name="Houck J."/>
            <person name="Hostin D."/>
            <person name="Houston K.A."/>
            <person name="Howland T.J."/>
            <person name="Wei M.-H."/>
            <person name="Ibegwam C."/>
            <person name="Jalali M."/>
            <person name="Kalush F."/>
            <person name="Karpen G.H."/>
            <person name="Ke Z."/>
            <person name="Kennison J.A."/>
            <person name="Ketchum K.A."/>
            <person name="Kimmel B.E."/>
            <person name="Kodira C.D."/>
            <person name="Kraft C.L."/>
            <person name="Kravitz S."/>
            <person name="Kulp D."/>
            <person name="Lai Z."/>
            <person name="Lasko P."/>
            <person name="Lei Y."/>
            <person name="Levitsky A.A."/>
            <person name="Li J.H."/>
            <person name="Li Z."/>
            <person name="Liang Y."/>
            <person name="Lin X."/>
            <person name="Liu X."/>
            <person name="Mattei B."/>
            <person name="McIntosh T.C."/>
            <person name="McLeod M.P."/>
            <person name="McPherson D."/>
            <person name="Merkulov G."/>
            <person name="Milshina N.V."/>
            <person name="Mobarry C."/>
            <person name="Morris J."/>
            <person name="Moshrefi A."/>
            <person name="Mount S.M."/>
            <person name="Moy M."/>
            <person name="Murphy B."/>
            <person name="Murphy L."/>
            <person name="Muzny D.M."/>
            <person name="Nelson D.L."/>
            <person name="Nelson D.R."/>
            <person name="Nelson K.A."/>
            <person name="Nixon K."/>
            <person name="Nusskern D.R."/>
            <person name="Pacleb J.M."/>
            <person name="Palazzolo M."/>
            <person name="Pittman G.S."/>
            <person name="Pan S."/>
            <person name="Pollard J."/>
            <person name="Puri V."/>
            <person name="Reese M.G."/>
            <person name="Reinert K."/>
            <person name="Remington K."/>
            <person name="Saunders R.D.C."/>
            <person name="Scheeler F."/>
            <person name="Shen H."/>
            <person name="Shue B.C."/>
            <person name="Siden-Kiamos I."/>
            <person name="Simpson M."/>
            <person name="Skupski M.P."/>
            <person name="Smith T.J."/>
            <person name="Spier E."/>
            <person name="Spradling A.C."/>
            <person name="Stapleton M."/>
            <person name="Strong R."/>
            <person name="Sun E."/>
            <person name="Svirskas R."/>
            <person name="Tector C."/>
            <person name="Turner R."/>
            <person name="Venter E."/>
            <person name="Wang A.H."/>
            <person name="Wang X."/>
            <person name="Wang Z.-Y."/>
            <person name="Wassarman D.A."/>
            <person name="Weinstock G.M."/>
            <person name="Weissenbach J."/>
            <person name="Williams S.M."/>
            <person name="Woodage T."/>
            <person name="Worley K.C."/>
            <person name="Wu D."/>
            <person name="Yang S."/>
            <person name="Yao Q.A."/>
            <person name="Ye J."/>
            <person name="Yeh R.-F."/>
            <person name="Zaveri J.S."/>
            <person name="Zhan M."/>
            <person name="Zhang G."/>
            <person name="Zhao Q."/>
            <person name="Zheng L."/>
            <person name="Zheng X.H."/>
            <person name="Zhong F.N."/>
            <person name="Zhong W."/>
            <person name="Zhou X."/>
            <person name="Zhu S.C."/>
            <person name="Zhu X."/>
            <person name="Smith H.O."/>
            <person name="Gibbs R.A."/>
            <person name="Myers E.W."/>
            <person name="Rubin G.M."/>
            <person name="Venter J.C."/>
        </authorList>
    </citation>
    <scope>NUCLEOTIDE SEQUENCE [LARGE SCALE GENOMIC DNA]</scope>
    <source>
        <strain>Berkeley</strain>
    </source>
</reference>
<reference key="3">
    <citation type="journal article" date="2002" name="Genome Biol.">
        <title>Annotation of the Drosophila melanogaster euchromatic genome: a systematic review.</title>
        <authorList>
            <person name="Misra S."/>
            <person name="Crosby M.A."/>
            <person name="Mungall C.J."/>
            <person name="Matthews B.B."/>
            <person name="Campbell K.S."/>
            <person name="Hradecky P."/>
            <person name="Huang Y."/>
            <person name="Kaminker J.S."/>
            <person name="Millburn G.H."/>
            <person name="Prochnik S.E."/>
            <person name="Smith C.D."/>
            <person name="Tupy J.L."/>
            <person name="Whitfield E.J."/>
            <person name="Bayraktaroglu L."/>
            <person name="Berman B.P."/>
            <person name="Bettencourt B.R."/>
            <person name="Celniker S.E."/>
            <person name="de Grey A.D.N.J."/>
            <person name="Drysdale R.A."/>
            <person name="Harris N.L."/>
            <person name="Richter J."/>
            <person name="Russo S."/>
            <person name="Schroeder A.J."/>
            <person name="Shu S.Q."/>
            <person name="Stapleton M."/>
            <person name="Yamada C."/>
            <person name="Ashburner M."/>
            <person name="Gelbart W.M."/>
            <person name="Rubin G.M."/>
            <person name="Lewis S.E."/>
        </authorList>
    </citation>
    <scope>GENOME REANNOTATION</scope>
    <source>
        <strain>Berkeley</strain>
    </source>
</reference>
<reference key="4">
    <citation type="journal article" date="2012" name="Biochem. J.">
        <title>A preliminary characterization of the cytosolic glutathione transferase proteome from Drosophila melanogaster.</title>
        <authorList>
            <person name="Saisawang C."/>
            <person name="Wongsantichon J."/>
            <person name="Ketterman A.J."/>
        </authorList>
    </citation>
    <scope>FUNCTION</scope>
    <scope>CATALYTIC ACTIVITY</scope>
    <scope>BIOPHYSICOCHEMICAL PROPERTIES</scope>
</reference>
<feature type="chain" id="PRO_0000185958" description="Glutathione S-transferase D6">
    <location>
        <begin position="1"/>
        <end position="215"/>
    </location>
</feature>
<feature type="domain" description="GST N-terminal">
    <location>
        <begin position="1"/>
        <end position="80"/>
    </location>
</feature>
<feature type="domain" description="GST C-terminal">
    <location>
        <begin position="86"/>
        <end position="206"/>
    </location>
</feature>
<feature type="binding site" evidence="1">
    <location>
        <position position="9"/>
    </location>
    <ligand>
        <name>glutathione</name>
        <dbReference type="ChEBI" id="CHEBI:57925"/>
    </ligand>
</feature>
<feature type="binding site" evidence="1">
    <location>
        <begin position="50"/>
        <end position="52"/>
    </location>
    <ligand>
        <name>glutathione</name>
        <dbReference type="ChEBI" id="CHEBI:57925"/>
    </ligand>
</feature>
<feature type="binding site" evidence="1">
    <location>
        <begin position="64"/>
        <end position="66"/>
    </location>
    <ligand>
        <name>glutathione</name>
        <dbReference type="ChEBI" id="CHEBI:57925"/>
    </ligand>
</feature>
<gene>
    <name evidence="5" type="primary">GstD6</name>
    <name type="synonym">gstD25</name>
    <name evidence="5" type="synonym">GSTD6-6</name>
    <name evidence="5" type="ORF">CG4423</name>
</gene>
<proteinExistence type="evidence at protein level"/>
<protein>
    <recommendedName>
        <fullName evidence="4">Glutathione S-transferase D6</fullName>
        <ecNumber evidence="3">2.5.1.18</ecNumber>
    </recommendedName>
</protein>
<accession>Q9VG94</accession>
<accession>Q9TX93</accession>
<organism>
    <name type="scientific">Drosophila melanogaster</name>
    <name type="common">Fruit fly</name>
    <dbReference type="NCBI Taxonomy" id="7227"/>
    <lineage>
        <taxon>Eukaryota</taxon>
        <taxon>Metazoa</taxon>
        <taxon>Ecdysozoa</taxon>
        <taxon>Arthropoda</taxon>
        <taxon>Hexapoda</taxon>
        <taxon>Insecta</taxon>
        <taxon>Pterygota</taxon>
        <taxon>Neoptera</taxon>
        <taxon>Endopterygota</taxon>
        <taxon>Diptera</taxon>
        <taxon>Brachycera</taxon>
        <taxon>Muscomorpha</taxon>
        <taxon>Ephydroidea</taxon>
        <taxon>Drosophilidae</taxon>
        <taxon>Drosophila</taxon>
        <taxon>Sophophora</taxon>
    </lineage>
</organism>
<evidence type="ECO:0000250" key="1"/>
<evidence type="ECO:0000250" key="2">
    <source>
        <dbReference type="UniProtKB" id="P30711"/>
    </source>
</evidence>
<evidence type="ECO:0000269" key="3">
    <source>
    </source>
</evidence>
<evidence type="ECO:0000303" key="4">
    <source>
    </source>
</evidence>
<evidence type="ECO:0000312" key="5">
    <source>
        <dbReference type="FlyBase" id="FBgn0010042"/>
    </source>
</evidence>